<feature type="chain" id="PRO_1000074514" description="Alanine--tRNA ligase">
    <location>
        <begin position="1"/>
        <end position="896"/>
    </location>
</feature>
<feature type="binding site" evidence="1">
    <location>
        <position position="599"/>
    </location>
    <ligand>
        <name>Zn(2+)</name>
        <dbReference type="ChEBI" id="CHEBI:29105"/>
    </ligand>
</feature>
<feature type="binding site" evidence="1">
    <location>
        <position position="603"/>
    </location>
    <ligand>
        <name>Zn(2+)</name>
        <dbReference type="ChEBI" id="CHEBI:29105"/>
    </ligand>
</feature>
<feature type="binding site" evidence="1">
    <location>
        <position position="707"/>
    </location>
    <ligand>
        <name>Zn(2+)</name>
        <dbReference type="ChEBI" id="CHEBI:29105"/>
    </ligand>
</feature>
<feature type="binding site" evidence="1">
    <location>
        <position position="711"/>
    </location>
    <ligand>
        <name>Zn(2+)</name>
        <dbReference type="ChEBI" id="CHEBI:29105"/>
    </ligand>
</feature>
<sequence>MQKTQMLSAEIFRRRGHIRKQCPLCKSHFWTLRPDQEVCGDQPCTPYGFIGNPPTKVAVESLRDVRERFLSFFERHGHARIKRYPVVARWRDDVYLVGASIYDFQPWVTSGAVPPPANPLTISQPSIRLTDVDKVGRSGRHLTGFEMMAHHAFNYPDKYVYWIDETTEYAYRFFTEELGIPPEEITFKESMWEGGGNAGECFEVLVRGLEAATLVFMHYEVKDGKYVELPLKIVDTGYGLERIYWLIKGTPTIYDAVFGPYLAKVRERLGVPEPPRDVMAKASIYFGQMDPEVISLDKAYDIIAEKIGVDGKWLREVVKPQEALYVLADHSRTVAWMIADGVIPSNSGAGYLARLLIRRALRGLMLAGVDAPLVELFDLHLKELRYDYPEVWEARSLILELVDMEEKKYREVLKSAPAVVKRALEENRRRGKAGLDKEDLVTLYDSYGLPPEVVAEAAKSMGIEVKVPDDFYSLLASRHVRREKGREATLVEMAKVADLPRTRELFYEDAYMRTFKAKVLRVIDGKYVVLDQTAFYAEGGGQPADTGVLRHSGGVAKVVDVQRVGHVIVHVVEGDVPQEGSEVVGEVDWERRYALMKMHTGTHVLIQSIRRVLGPHIWQAGAQKDIPFSRIDVTHYKLPTPEEVAKIERLANDVVQRDLPVYVKVMPRNEAEAKYGFILYQGGVVPAREIRVVQIGPDDEPYDVQACGGTHLRRTGEIGLIKVHKVERIADGVVRFIFTTGPHAVAYVQELERQAAEAAALGGGSKEELVEVVKRLLKRAEEAEKKARHYAELYAAALAENLKAEAVGQRRLAVVELDDEELAKRVALLATKRDPDLVLVVKAGERVTIYTGGVDVGPIVKALREIGFRGGGSKTFAQGVYAGDVEKLKEAIRRAL</sequence>
<proteinExistence type="inferred from homology"/>
<reference key="1">
    <citation type="submission" date="2007-02" db="EMBL/GenBank/DDBJ databases">
        <title>Complete sequence of Pyrobaculum calidifontis JCM 11548.</title>
        <authorList>
            <consortium name="US DOE Joint Genome Institute"/>
            <person name="Copeland A."/>
            <person name="Lucas S."/>
            <person name="Lapidus A."/>
            <person name="Barry K."/>
            <person name="Glavina del Rio T."/>
            <person name="Dalin E."/>
            <person name="Tice H."/>
            <person name="Pitluck S."/>
            <person name="Chain P."/>
            <person name="Malfatti S."/>
            <person name="Shin M."/>
            <person name="Vergez L."/>
            <person name="Schmutz J."/>
            <person name="Larimer F."/>
            <person name="Land M."/>
            <person name="Hauser L."/>
            <person name="Kyrpides N."/>
            <person name="Mikhailova N."/>
            <person name="Cozen A.E."/>
            <person name="Fitz-Gibbon S.T."/>
            <person name="House C.H."/>
            <person name="Saltikov C."/>
            <person name="Lowe T.M."/>
            <person name="Richardson P."/>
        </authorList>
    </citation>
    <scope>NUCLEOTIDE SEQUENCE [LARGE SCALE GENOMIC DNA]</scope>
    <source>
        <strain>DSM 21063 / JCM 11548 / VA1</strain>
    </source>
</reference>
<accession>A3MXP1</accession>
<gene>
    <name evidence="1" type="primary">alaS</name>
    <name type="ordered locus">Pcal_1993</name>
</gene>
<organism>
    <name type="scientific">Pyrobaculum calidifontis (strain DSM 21063 / JCM 11548 / VA1)</name>
    <dbReference type="NCBI Taxonomy" id="410359"/>
    <lineage>
        <taxon>Archaea</taxon>
        <taxon>Thermoproteota</taxon>
        <taxon>Thermoprotei</taxon>
        <taxon>Thermoproteales</taxon>
        <taxon>Thermoproteaceae</taxon>
        <taxon>Pyrobaculum</taxon>
    </lineage>
</organism>
<protein>
    <recommendedName>
        <fullName evidence="1">Alanine--tRNA ligase</fullName>
        <ecNumber evidence="1">6.1.1.7</ecNumber>
    </recommendedName>
    <alternativeName>
        <fullName evidence="1">Alanyl-tRNA synthetase</fullName>
        <shortName evidence="1">AlaRS</shortName>
    </alternativeName>
</protein>
<dbReference type="EC" id="6.1.1.7" evidence="1"/>
<dbReference type="EMBL" id="CP000561">
    <property type="protein sequence ID" value="ABO09408.1"/>
    <property type="molecule type" value="Genomic_DNA"/>
</dbReference>
<dbReference type="SMR" id="A3MXP1"/>
<dbReference type="STRING" id="410359.Pcal_1993"/>
<dbReference type="KEGG" id="pcl:Pcal_1993"/>
<dbReference type="eggNOG" id="arCOG01255">
    <property type="taxonomic scope" value="Archaea"/>
</dbReference>
<dbReference type="HOGENOM" id="CLU_004485_4_0_2"/>
<dbReference type="Proteomes" id="UP000001431">
    <property type="component" value="Chromosome"/>
</dbReference>
<dbReference type="GO" id="GO:0005737">
    <property type="term" value="C:cytoplasm"/>
    <property type="evidence" value="ECO:0007669"/>
    <property type="project" value="UniProtKB-SubCell"/>
</dbReference>
<dbReference type="GO" id="GO:0004813">
    <property type="term" value="F:alanine-tRNA ligase activity"/>
    <property type="evidence" value="ECO:0007669"/>
    <property type="project" value="UniProtKB-UniRule"/>
</dbReference>
<dbReference type="GO" id="GO:0002161">
    <property type="term" value="F:aminoacyl-tRNA deacylase activity"/>
    <property type="evidence" value="ECO:0007669"/>
    <property type="project" value="TreeGrafter"/>
</dbReference>
<dbReference type="GO" id="GO:0005524">
    <property type="term" value="F:ATP binding"/>
    <property type="evidence" value="ECO:0007669"/>
    <property type="project" value="UniProtKB-UniRule"/>
</dbReference>
<dbReference type="GO" id="GO:0000049">
    <property type="term" value="F:tRNA binding"/>
    <property type="evidence" value="ECO:0007669"/>
    <property type="project" value="UniProtKB-KW"/>
</dbReference>
<dbReference type="GO" id="GO:0008270">
    <property type="term" value="F:zinc ion binding"/>
    <property type="evidence" value="ECO:0007669"/>
    <property type="project" value="UniProtKB-UniRule"/>
</dbReference>
<dbReference type="GO" id="GO:0006419">
    <property type="term" value="P:alanyl-tRNA aminoacylation"/>
    <property type="evidence" value="ECO:0007669"/>
    <property type="project" value="UniProtKB-UniRule"/>
</dbReference>
<dbReference type="CDD" id="cd00673">
    <property type="entry name" value="AlaRS_core"/>
    <property type="match status" value="1"/>
</dbReference>
<dbReference type="FunFam" id="2.40.30.130:FF:000010">
    <property type="entry name" value="Alanine--tRNA ligase"/>
    <property type="match status" value="1"/>
</dbReference>
<dbReference type="FunFam" id="3.30.930.10:FF:000056">
    <property type="entry name" value="Alanine--tRNA ligase"/>
    <property type="match status" value="1"/>
</dbReference>
<dbReference type="FunFam" id="3.30.980.10:FF:000004">
    <property type="entry name" value="Alanine--tRNA ligase, cytoplasmic"/>
    <property type="match status" value="1"/>
</dbReference>
<dbReference type="Gene3D" id="2.40.30.130">
    <property type="match status" value="1"/>
</dbReference>
<dbReference type="Gene3D" id="3.10.310.40">
    <property type="match status" value="1"/>
</dbReference>
<dbReference type="Gene3D" id="3.30.930.10">
    <property type="entry name" value="Bira Bifunctional Protein, Domain 2"/>
    <property type="match status" value="1"/>
</dbReference>
<dbReference type="Gene3D" id="3.30.980.10">
    <property type="entry name" value="Threonyl-trna Synthetase, Chain A, domain 2"/>
    <property type="match status" value="1"/>
</dbReference>
<dbReference type="HAMAP" id="MF_00036_A">
    <property type="entry name" value="Ala_tRNA_synth_A"/>
    <property type="match status" value="1"/>
</dbReference>
<dbReference type="InterPro" id="IPR045864">
    <property type="entry name" value="aa-tRNA-synth_II/BPL/LPL"/>
</dbReference>
<dbReference type="InterPro" id="IPR002318">
    <property type="entry name" value="Ala-tRNA-lgiase_IIc"/>
</dbReference>
<dbReference type="InterPro" id="IPR018162">
    <property type="entry name" value="Ala-tRNA-ligase_IIc_anticod-bd"/>
</dbReference>
<dbReference type="InterPro" id="IPR018165">
    <property type="entry name" value="Ala-tRNA-synth_IIc_core"/>
</dbReference>
<dbReference type="InterPro" id="IPR018164">
    <property type="entry name" value="Ala-tRNA-synth_IIc_N"/>
</dbReference>
<dbReference type="InterPro" id="IPR022429">
    <property type="entry name" value="Ala-tRNA_lgiase_arc"/>
</dbReference>
<dbReference type="InterPro" id="IPR050058">
    <property type="entry name" value="Ala-tRNA_ligase"/>
</dbReference>
<dbReference type="InterPro" id="IPR018163">
    <property type="entry name" value="Thr/Ala-tRNA-synth_IIc_edit"/>
</dbReference>
<dbReference type="InterPro" id="IPR009000">
    <property type="entry name" value="Transl_B-barrel_sf"/>
</dbReference>
<dbReference type="InterPro" id="IPR012947">
    <property type="entry name" value="tRNA_SAD"/>
</dbReference>
<dbReference type="NCBIfam" id="TIGR03683">
    <property type="entry name" value="A-tRNA_syn_arch"/>
    <property type="match status" value="1"/>
</dbReference>
<dbReference type="NCBIfam" id="TIGR00344">
    <property type="entry name" value="alaS"/>
    <property type="match status" value="1"/>
</dbReference>
<dbReference type="PANTHER" id="PTHR11777:SF9">
    <property type="entry name" value="ALANINE--TRNA LIGASE, CYTOPLASMIC"/>
    <property type="match status" value="1"/>
</dbReference>
<dbReference type="PANTHER" id="PTHR11777">
    <property type="entry name" value="ALANYL-TRNA SYNTHETASE"/>
    <property type="match status" value="1"/>
</dbReference>
<dbReference type="Pfam" id="PF01411">
    <property type="entry name" value="tRNA-synt_2c"/>
    <property type="match status" value="1"/>
</dbReference>
<dbReference type="Pfam" id="PF07973">
    <property type="entry name" value="tRNA_SAD"/>
    <property type="match status" value="1"/>
</dbReference>
<dbReference type="PRINTS" id="PR00980">
    <property type="entry name" value="TRNASYNTHALA"/>
</dbReference>
<dbReference type="SMART" id="SM00863">
    <property type="entry name" value="tRNA_SAD"/>
    <property type="match status" value="1"/>
</dbReference>
<dbReference type="SUPFAM" id="SSF55681">
    <property type="entry name" value="Class II aaRS and biotin synthetases"/>
    <property type="match status" value="1"/>
</dbReference>
<dbReference type="SUPFAM" id="SSF101353">
    <property type="entry name" value="Putative anticodon-binding domain of alanyl-tRNA synthetase (AlaRS)"/>
    <property type="match status" value="1"/>
</dbReference>
<dbReference type="SUPFAM" id="SSF55186">
    <property type="entry name" value="ThrRS/AlaRS common domain"/>
    <property type="match status" value="1"/>
</dbReference>
<dbReference type="SUPFAM" id="SSF50447">
    <property type="entry name" value="Translation proteins"/>
    <property type="match status" value="1"/>
</dbReference>
<dbReference type="PROSITE" id="PS50860">
    <property type="entry name" value="AA_TRNA_LIGASE_II_ALA"/>
    <property type="match status" value="1"/>
</dbReference>
<name>SYA_PYRCJ</name>
<evidence type="ECO:0000255" key="1">
    <source>
        <dbReference type="HAMAP-Rule" id="MF_00036"/>
    </source>
</evidence>
<keyword id="KW-0030">Aminoacyl-tRNA synthetase</keyword>
<keyword id="KW-0067">ATP-binding</keyword>
<keyword id="KW-0963">Cytoplasm</keyword>
<keyword id="KW-0436">Ligase</keyword>
<keyword id="KW-0479">Metal-binding</keyword>
<keyword id="KW-0547">Nucleotide-binding</keyword>
<keyword id="KW-0648">Protein biosynthesis</keyword>
<keyword id="KW-0694">RNA-binding</keyword>
<keyword id="KW-0820">tRNA-binding</keyword>
<keyword id="KW-0862">Zinc</keyword>
<comment type="function">
    <text evidence="1">Catalyzes the attachment of alanine to tRNA(Ala) in a two-step reaction: alanine is first activated by ATP to form Ala-AMP and then transferred to the acceptor end of tRNA(Ala). Also edits incorrectly charged Ser-tRNA(Ala) and Gly-tRNA(Ala) via its editing domain.</text>
</comment>
<comment type="catalytic activity">
    <reaction evidence="1">
        <text>tRNA(Ala) + L-alanine + ATP = L-alanyl-tRNA(Ala) + AMP + diphosphate</text>
        <dbReference type="Rhea" id="RHEA:12540"/>
        <dbReference type="Rhea" id="RHEA-COMP:9657"/>
        <dbReference type="Rhea" id="RHEA-COMP:9923"/>
        <dbReference type="ChEBI" id="CHEBI:30616"/>
        <dbReference type="ChEBI" id="CHEBI:33019"/>
        <dbReference type="ChEBI" id="CHEBI:57972"/>
        <dbReference type="ChEBI" id="CHEBI:78442"/>
        <dbReference type="ChEBI" id="CHEBI:78497"/>
        <dbReference type="ChEBI" id="CHEBI:456215"/>
        <dbReference type="EC" id="6.1.1.7"/>
    </reaction>
</comment>
<comment type="cofactor">
    <cofactor evidence="1">
        <name>Zn(2+)</name>
        <dbReference type="ChEBI" id="CHEBI:29105"/>
    </cofactor>
    <text evidence="1">Binds 1 zinc ion per subunit.</text>
</comment>
<comment type="subcellular location">
    <subcellularLocation>
        <location evidence="1">Cytoplasm</location>
    </subcellularLocation>
</comment>
<comment type="domain">
    <text evidence="1">Consists of three domains; the N-terminal catalytic domain, the editing domain and the C-terminal C-Ala domain. The editing domain removes incorrectly charged amino acids, while the C-Ala domain, along with tRNA(Ala), serves as a bridge to cooperatively bring together the editing and aminoacylation centers thus stimulating deacylation of misacylated tRNAs.</text>
</comment>
<comment type="similarity">
    <text evidence="1">Belongs to the class-II aminoacyl-tRNA synthetase family.</text>
</comment>